<sequence length="187" mass="20123">MPKPTKGPRLGGGPAHERLMLANLAQSLFEHKSIKTTETKAKRLRPVAERLVTFAKRGDLHARRRVMGIIPSKSVVHELFTEIAPLVAERDGGYTRITKLGFRKGDNAPMVQIELVLEPVTPKVRSSRTSTATAPAAAAPAAEAPAEESDVPVEETDAVEHTDETPAETTDEAAAEVEADAAEKSDK</sequence>
<keyword id="KW-0687">Ribonucleoprotein</keyword>
<keyword id="KW-0689">Ribosomal protein</keyword>
<gene>
    <name evidence="1" type="primary">rplQ</name>
    <name type="ordered locus">CMM_2583</name>
</gene>
<evidence type="ECO:0000255" key="1">
    <source>
        <dbReference type="HAMAP-Rule" id="MF_01368"/>
    </source>
</evidence>
<evidence type="ECO:0000256" key="2">
    <source>
        <dbReference type="SAM" id="MobiDB-lite"/>
    </source>
</evidence>
<evidence type="ECO:0000305" key="3"/>
<organism>
    <name type="scientific">Clavibacter michiganensis subsp. michiganensis (strain NCPPB 382)</name>
    <dbReference type="NCBI Taxonomy" id="443906"/>
    <lineage>
        <taxon>Bacteria</taxon>
        <taxon>Bacillati</taxon>
        <taxon>Actinomycetota</taxon>
        <taxon>Actinomycetes</taxon>
        <taxon>Micrococcales</taxon>
        <taxon>Microbacteriaceae</taxon>
        <taxon>Clavibacter</taxon>
    </lineage>
</organism>
<dbReference type="EMBL" id="AM711867">
    <property type="protein sequence ID" value="CAN02666.1"/>
    <property type="molecule type" value="Genomic_DNA"/>
</dbReference>
<dbReference type="RefSeq" id="WP_012039272.1">
    <property type="nucleotide sequence ID" value="NC_009480.1"/>
</dbReference>
<dbReference type="SMR" id="A5CU79"/>
<dbReference type="GeneID" id="92948586"/>
<dbReference type="KEGG" id="cmi:CMM_2583"/>
<dbReference type="eggNOG" id="COG0203">
    <property type="taxonomic scope" value="Bacteria"/>
</dbReference>
<dbReference type="HOGENOM" id="CLU_074407_0_0_11"/>
<dbReference type="OrthoDB" id="9809073at2"/>
<dbReference type="Proteomes" id="UP000001564">
    <property type="component" value="Chromosome"/>
</dbReference>
<dbReference type="GO" id="GO:0022625">
    <property type="term" value="C:cytosolic large ribosomal subunit"/>
    <property type="evidence" value="ECO:0007669"/>
    <property type="project" value="TreeGrafter"/>
</dbReference>
<dbReference type="GO" id="GO:0003735">
    <property type="term" value="F:structural constituent of ribosome"/>
    <property type="evidence" value="ECO:0007669"/>
    <property type="project" value="InterPro"/>
</dbReference>
<dbReference type="GO" id="GO:0006412">
    <property type="term" value="P:translation"/>
    <property type="evidence" value="ECO:0007669"/>
    <property type="project" value="UniProtKB-UniRule"/>
</dbReference>
<dbReference type="FunFam" id="3.90.1030.10:FF:000001">
    <property type="entry name" value="50S ribosomal protein L17"/>
    <property type="match status" value="1"/>
</dbReference>
<dbReference type="Gene3D" id="3.90.1030.10">
    <property type="entry name" value="Ribosomal protein L17"/>
    <property type="match status" value="1"/>
</dbReference>
<dbReference type="HAMAP" id="MF_01368">
    <property type="entry name" value="Ribosomal_bL17"/>
    <property type="match status" value="1"/>
</dbReference>
<dbReference type="InterPro" id="IPR000456">
    <property type="entry name" value="Ribosomal_bL17"/>
</dbReference>
<dbReference type="InterPro" id="IPR047859">
    <property type="entry name" value="Ribosomal_bL17_CS"/>
</dbReference>
<dbReference type="InterPro" id="IPR036373">
    <property type="entry name" value="Ribosomal_bL17_sf"/>
</dbReference>
<dbReference type="NCBIfam" id="TIGR00059">
    <property type="entry name" value="L17"/>
    <property type="match status" value="1"/>
</dbReference>
<dbReference type="PANTHER" id="PTHR14413:SF16">
    <property type="entry name" value="LARGE RIBOSOMAL SUBUNIT PROTEIN BL17M"/>
    <property type="match status" value="1"/>
</dbReference>
<dbReference type="PANTHER" id="PTHR14413">
    <property type="entry name" value="RIBOSOMAL PROTEIN L17"/>
    <property type="match status" value="1"/>
</dbReference>
<dbReference type="Pfam" id="PF01196">
    <property type="entry name" value="Ribosomal_L17"/>
    <property type="match status" value="1"/>
</dbReference>
<dbReference type="SUPFAM" id="SSF64263">
    <property type="entry name" value="Prokaryotic ribosomal protein L17"/>
    <property type="match status" value="1"/>
</dbReference>
<dbReference type="PROSITE" id="PS01167">
    <property type="entry name" value="RIBOSOMAL_L17"/>
    <property type="match status" value="1"/>
</dbReference>
<reference key="1">
    <citation type="journal article" date="2008" name="J. Bacteriol.">
        <title>The genome sequence of the tomato-pathogenic actinomycete Clavibacter michiganensis subsp. michiganensis NCPPB382 reveals a large island involved in pathogenicity.</title>
        <authorList>
            <person name="Gartemann K.-H."/>
            <person name="Abt B."/>
            <person name="Bekel T."/>
            <person name="Burger A."/>
            <person name="Engemann J."/>
            <person name="Fluegel M."/>
            <person name="Gaigalat L."/>
            <person name="Goesmann A."/>
            <person name="Graefen I."/>
            <person name="Kalinowski J."/>
            <person name="Kaup O."/>
            <person name="Kirchner O."/>
            <person name="Krause L."/>
            <person name="Linke B."/>
            <person name="McHardy A."/>
            <person name="Meyer F."/>
            <person name="Pohle S."/>
            <person name="Rueckert C."/>
            <person name="Schneiker S."/>
            <person name="Zellermann E.-M."/>
            <person name="Puehler A."/>
            <person name="Eichenlaub R."/>
            <person name="Kaiser O."/>
            <person name="Bartels D."/>
        </authorList>
    </citation>
    <scope>NUCLEOTIDE SEQUENCE [LARGE SCALE GENOMIC DNA]</scope>
    <source>
        <strain>NCPPB 382</strain>
    </source>
</reference>
<protein>
    <recommendedName>
        <fullName evidence="1">Large ribosomal subunit protein bL17</fullName>
    </recommendedName>
    <alternativeName>
        <fullName evidence="3">50S ribosomal protein L17</fullName>
    </alternativeName>
</protein>
<feature type="chain" id="PRO_1000055801" description="Large ribosomal subunit protein bL17">
    <location>
        <begin position="1"/>
        <end position="187"/>
    </location>
</feature>
<feature type="region of interest" description="Disordered" evidence="2">
    <location>
        <begin position="122"/>
        <end position="187"/>
    </location>
</feature>
<feature type="compositionally biased region" description="Low complexity" evidence="2">
    <location>
        <begin position="127"/>
        <end position="144"/>
    </location>
</feature>
<feature type="compositionally biased region" description="Acidic residues" evidence="2">
    <location>
        <begin position="145"/>
        <end position="157"/>
    </location>
</feature>
<feature type="compositionally biased region" description="Acidic residues" evidence="2">
    <location>
        <begin position="165"/>
        <end position="180"/>
    </location>
</feature>
<proteinExistence type="inferred from homology"/>
<comment type="subunit">
    <text evidence="1">Part of the 50S ribosomal subunit. Contacts protein L32.</text>
</comment>
<comment type="similarity">
    <text evidence="1">Belongs to the bacterial ribosomal protein bL17 family.</text>
</comment>
<accession>A5CU79</accession>
<name>RL17_CLAM3</name>